<feature type="chain" id="PRO_0000232744" description="Membrane-associated phosphatidylinositol transfer protein 3">
    <location>
        <begin position="1"/>
        <end position="974"/>
    </location>
</feature>
<feature type="domain" description="DDHD" evidence="3">
    <location>
        <begin position="390"/>
        <end position="594"/>
    </location>
</feature>
<feature type="region of interest" description="Disordered" evidence="4">
    <location>
        <begin position="310"/>
        <end position="347"/>
    </location>
</feature>
<feature type="region of interest" description="Disordered" evidence="4">
    <location>
        <begin position="497"/>
        <end position="535"/>
    </location>
</feature>
<feature type="region of interest" description="Disordered" evidence="4">
    <location>
        <begin position="927"/>
        <end position="974"/>
    </location>
</feature>
<feature type="compositionally biased region" description="Polar residues" evidence="4">
    <location>
        <begin position="312"/>
        <end position="325"/>
    </location>
</feature>
<feature type="compositionally biased region" description="Low complexity" evidence="4">
    <location>
        <begin position="520"/>
        <end position="533"/>
    </location>
</feature>
<feature type="modified residue" description="Phosphoserine" evidence="7">
    <location>
        <position position="30"/>
    </location>
</feature>
<feature type="modified residue" description="Phosphoserine" evidence="7">
    <location>
        <position position="31"/>
    </location>
</feature>
<feature type="modified residue" description="Phosphoserine" evidence="7">
    <location>
        <position position="109"/>
    </location>
</feature>
<feature type="modified residue" description="Phosphoserine" evidence="7">
    <location>
        <position position="295"/>
    </location>
</feature>
<feature type="modified residue" description="Phosphoserine" evidence="7">
    <location>
        <position position="298"/>
    </location>
</feature>
<feature type="modified residue" description="Phosphoserine" evidence="2">
    <location>
        <position position="321"/>
    </location>
</feature>
<feature type="modified residue" description="Phosphoserine" evidence="2">
    <location>
        <position position="343"/>
    </location>
</feature>
<feature type="modified residue" description="Phosphoserine" evidence="7">
    <location>
        <position position="495"/>
    </location>
</feature>
<feature type="modified residue" description="Phosphoserine" evidence="2">
    <location>
        <position position="612"/>
    </location>
</feature>
<feature type="modified residue" description="Phosphoserine" evidence="2">
    <location>
        <position position="907"/>
    </location>
</feature>
<feature type="modified residue" description="Phosphoserine" evidence="7">
    <location>
        <position position="928"/>
    </location>
</feature>
<feature type="modified residue" description="Phosphoserine" evidence="2">
    <location>
        <position position="946"/>
    </location>
</feature>
<feature type="splice variant" id="VSP_017966" description="In isoform 2." evidence="5">
    <location>
        <begin position="77"/>
        <end position="92"/>
    </location>
</feature>
<feature type="sequence conflict" description="In Ref. 1; BAE27916." evidence="6" ref="1">
    <original>S</original>
    <variation>N</variation>
    <location>
        <position position="849"/>
    </location>
</feature>
<comment type="function">
    <text evidence="1">Catalyzes the transfer of phosphatidylinositol and phosphatidylcholine between membranes (in vitro). Binds calcium ions (By similarity).</text>
</comment>
<comment type="subunit">
    <text evidence="1">Interacts with PTK2B via its C-terminus.</text>
</comment>
<comment type="subcellular location">
    <subcellularLocation>
        <location evidence="6">Endomembrane system</location>
        <topology evidence="6">Peripheral membrane protein</topology>
    </subcellularLocation>
</comment>
<comment type="alternative products">
    <event type="alternative splicing"/>
    <isoform>
        <id>Q3UHE1-1</id>
        <name>1</name>
        <sequence type="displayed"/>
    </isoform>
    <isoform>
        <id>Q3UHE1-2</id>
        <name>2</name>
        <sequence type="described" ref="VSP_017966"/>
    </isoform>
</comment>
<comment type="similarity">
    <text evidence="6">Belongs to the PtdIns transfer protein family. PI transfer class IIA subfamily.</text>
</comment>
<organism>
    <name type="scientific">Mus musculus</name>
    <name type="common">Mouse</name>
    <dbReference type="NCBI Taxonomy" id="10090"/>
    <lineage>
        <taxon>Eukaryota</taxon>
        <taxon>Metazoa</taxon>
        <taxon>Chordata</taxon>
        <taxon>Craniata</taxon>
        <taxon>Vertebrata</taxon>
        <taxon>Euteleostomi</taxon>
        <taxon>Mammalia</taxon>
        <taxon>Eutheria</taxon>
        <taxon>Euarchontoglires</taxon>
        <taxon>Glires</taxon>
        <taxon>Rodentia</taxon>
        <taxon>Myomorpha</taxon>
        <taxon>Muroidea</taxon>
        <taxon>Muridae</taxon>
        <taxon>Murinae</taxon>
        <taxon>Mus</taxon>
        <taxon>Mus</taxon>
    </lineage>
</organism>
<reference key="1">
    <citation type="journal article" date="2005" name="Science">
        <title>The transcriptional landscape of the mammalian genome.</title>
        <authorList>
            <person name="Carninci P."/>
            <person name="Kasukawa T."/>
            <person name="Katayama S."/>
            <person name="Gough J."/>
            <person name="Frith M.C."/>
            <person name="Maeda N."/>
            <person name="Oyama R."/>
            <person name="Ravasi T."/>
            <person name="Lenhard B."/>
            <person name="Wells C."/>
            <person name="Kodzius R."/>
            <person name="Shimokawa K."/>
            <person name="Bajic V.B."/>
            <person name="Brenner S.E."/>
            <person name="Batalov S."/>
            <person name="Forrest A.R."/>
            <person name="Zavolan M."/>
            <person name="Davis M.J."/>
            <person name="Wilming L.G."/>
            <person name="Aidinis V."/>
            <person name="Allen J.E."/>
            <person name="Ambesi-Impiombato A."/>
            <person name="Apweiler R."/>
            <person name="Aturaliya R.N."/>
            <person name="Bailey T.L."/>
            <person name="Bansal M."/>
            <person name="Baxter L."/>
            <person name="Beisel K.W."/>
            <person name="Bersano T."/>
            <person name="Bono H."/>
            <person name="Chalk A.M."/>
            <person name="Chiu K.P."/>
            <person name="Choudhary V."/>
            <person name="Christoffels A."/>
            <person name="Clutterbuck D.R."/>
            <person name="Crowe M.L."/>
            <person name="Dalla E."/>
            <person name="Dalrymple B.P."/>
            <person name="de Bono B."/>
            <person name="Della Gatta G."/>
            <person name="di Bernardo D."/>
            <person name="Down T."/>
            <person name="Engstrom P."/>
            <person name="Fagiolini M."/>
            <person name="Faulkner G."/>
            <person name="Fletcher C.F."/>
            <person name="Fukushima T."/>
            <person name="Furuno M."/>
            <person name="Futaki S."/>
            <person name="Gariboldi M."/>
            <person name="Georgii-Hemming P."/>
            <person name="Gingeras T.R."/>
            <person name="Gojobori T."/>
            <person name="Green R.E."/>
            <person name="Gustincich S."/>
            <person name="Harbers M."/>
            <person name="Hayashi Y."/>
            <person name="Hensch T.K."/>
            <person name="Hirokawa N."/>
            <person name="Hill D."/>
            <person name="Huminiecki L."/>
            <person name="Iacono M."/>
            <person name="Ikeo K."/>
            <person name="Iwama A."/>
            <person name="Ishikawa T."/>
            <person name="Jakt M."/>
            <person name="Kanapin A."/>
            <person name="Katoh M."/>
            <person name="Kawasawa Y."/>
            <person name="Kelso J."/>
            <person name="Kitamura H."/>
            <person name="Kitano H."/>
            <person name="Kollias G."/>
            <person name="Krishnan S.P."/>
            <person name="Kruger A."/>
            <person name="Kummerfeld S.K."/>
            <person name="Kurochkin I.V."/>
            <person name="Lareau L.F."/>
            <person name="Lazarevic D."/>
            <person name="Lipovich L."/>
            <person name="Liu J."/>
            <person name="Liuni S."/>
            <person name="McWilliam S."/>
            <person name="Madan Babu M."/>
            <person name="Madera M."/>
            <person name="Marchionni L."/>
            <person name="Matsuda H."/>
            <person name="Matsuzawa S."/>
            <person name="Miki H."/>
            <person name="Mignone F."/>
            <person name="Miyake S."/>
            <person name="Morris K."/>
            <person name="Mottagui-Tabar S."/>
            <person name="Mulder N."/>
            <person name="Nakano N."/>
            <person name="Nakauchi H."/>
            <person name="Ng P."/>
            <person name="Nilsson R."/>
            <person name="Nishiguchi S."/>
            <person name="Nishikawa S."/>
            <person name="Nori F."/>
            <person name="Ohara O."/>
            <person name="Okazaki Y."/>
            <person name="Orlando V."/>
            <person name="Pang K.C."/>
            <person name="Pavan W.J."/>
            <person name="Pavesi G."/>
            <person name="Pesole G."/>
            <person name="Petrovsky N."/>
            <person name="Piazza S."/>
            <person name="Reed J."/>
            <person name="Reid J.F."/>
            <person name="Ring B.Z."/>
            <person name="Ringwald M."/>
            <person name="Rost B."/>
            <person name="Ruan Y."/>
            <person name="Salzberg S.L."/>
            <person name="Sandelin A."/>
            <person name="Schneider C."/>
            <person name="Schoenbach C."/>
            <person name="Sekiguchi K."/>
            <person name="Semple C.A."/>
            <person name="Seno S."/>
            <person name="Sessa L."/>
            <person name="Sheng Y."/>
            <person name="Shibata Y."/>
            <person name="Shimada H."/>
            <person name="Shimada K."/>
            <person name="Silva D."/>
            <person name="Sinclair B."/>
            <person name="Sperling S."/>
            <person name="Stupka E."/>
            <person name="Sugiura K."/>
            <person name="Sultana R."/>
            <person name="Takenaka Y."/>
            <person name="Taki K."/>
            <person name="Tammoja K."/>
            <person name="Tan S.L."/>
            <person name="Tang S."/>
            <person name="Taylor M.S."/>
            <person name="Tegner J."/>
            <person name="Teichmann S.A."/>
            <person name="Ueda H.R."/>
            <person name="van Nimwegen E."/>
            <person name="Verardo R."/>
            <person name="Wei C.L."/>
            <person name="Yagi K."/>
            <person name="Yamanishi H."/>
            <person name="Zabarovsky E."/>
            <person name="Zhu S."/>
            <person name="Zimmer A."/>
            <person name="Hide W."/>
            <person name="Bult C."/>
            <person name="Grimmond S.M."/>
            <person name="Teasdale R.D."/>
            <person name="Liu E.T."/>
            <person name="Brusic V."/>
            <person name="Quackenbush J."/>
            <person name="Wahlestedt C."/>
            <person name="Mattick J.S."/>
            <person name="Hume D.A."/>
            <person name="Kai C."/>
            <person name="Sasaki D."/>
            <person name="Tomaru Y."/>
            <person name="Fukuda S."/>
            <person name="Kanamori-Katayama M."/>
            <person name="Suzuki M."/>
            <person name="Aoki J."/>
            <person name="Arakawa T."/>
            <person name="Iida J."/>
            <person name="Imamura K."/>
            <person name="Itoh M."/>
            <person name="Kato T."/>
            <person name="Kawaji H."/>
            <person name="Kawagashira N."/>
            <person name="Kawashima T."/>
            <person name="Kojima M."/>
            <person name="Kondo S."/>
            <person name="Konno H."/>
            <person name="Nakano K."/>
            <person name="Ninomiya N."/>
            <person name="Nishio T."/>
            <person name="Okada M."/>
            <person name="Plessy C."/>
            <person name="Shibata K."/>
            <person name="Shiraki T."/>
            <person name="Suzuki S."/>
            <person name="Tagami M."/>
            <person name="Waki K."/>
            <person name="Watahiki A."/>
            <person name="Okamura-Oho Y."/>
            <person name="Suzuki H."/>
            <person name="Kawai J."/>
            <person name="Hayashizaki Y."/>
        </authorList>
    </citation>
    <scope>NUCLEOTIDE SEQUENCE [LARGE SCALE MRNA] (ISOFORMS 1 AND 2)</scope>
    <source>
        <strain>C57BL/6J</strain>
        <tissue>Brain</tissue>
    </source>
</reference>
<reference key="2">
    <citation type="journal article" date="2009" name="PLoS Biol.">
        <title>Lineage-specific biology revealed by a finished genome assembly of the mouse.</title>
        <authorList>
            <person name="Church D.M."/>
            <person name="Goodstadt L."/>
            <person name="Hillier L.W."/>
            <person name="Zody M.C."/>
            <person name="Goldstein S."/>
            <person name="She X."/>
            <person name="Bult C.J."/>
            <person name="Agarwala R."/>
            <person name="Cherry J.L."/>
            <person name="DiCuccio M."/>
            <person name="Hlavina W."/>
            <person name="Kapustin Y."/>
            <person name="Meric P."/>
            <person name="Maglott D."/>
            <person name="Birtle Z."/>
            <person name="Marques A.C."/>
            <person name="Graves T."/>
            <person name="Zhou S."/>
            <person name="Teague B."/>
            <person name="Potamousis K."/>
            <person name="Churas C."/>
            <person name="Place M."/>
            <person name="Herschleb J."/>
            <person name="Runnheim R."/>
            <person name="Forrest D."/>
            <person name="Amos-Landgraf J."/>
            <person name="Schwartz D.C."/>
            <person name="Cheng Z."/>
            <person name="Lindblad-Toh K."/>
            <person name="Eichler E.E."/>
            <person name="Ponting C.P."/>
        </authorList>
    </citation>
    <scope>NUCLEOTIDE SEQUENCE [LARGE SCALE GENOMIC DNA]</scope>
    <source>
        <strain>C57BL/6J</strain>
    </source>
</reference>
<reference key="3">
    <citation type="journal article" date="2010" name="Cell">
        <title>A tissue-specific atlas of mouse protein phosphorylation and expression.</title>
        <authorList>
            <person name="Huttlin E.L."/>
            <person name="Jedrychowski M.P."/>
            <person name="Elias J.E."/>
            <person name="Goswami T."/>
            <person name="Rad R."/>
            <person name="Beausoleil S.A."/>
            <person name="Villen J."/>
            <person name="Haas W."/>
            <person name="Sowa M.E."/>
            <person name="Gygi S.P."/>
        </authorList>
    </citation>
    <scope>PHOSPHORYLATION [LARGE SCALE ANALYSIS] AT SER-30; SER-31; SER-109; SER-295; SER-298; SER-495 AND SER-928</scope>
    <scope>IDENTIFICATION BY MASS SPECTROMETRY [LARGE SCALE ANALYSIS]</scope>
    <source>
        <tissue>Brain</tissue>
    </source>
</reference>
<accession>Q3UHE1</accession>
<accession>A6QRE8</accession>
<accession>Q3UH22</accession>
<accession>Q5RIT9</accession>
<keyword id="KW-0025">Alternative splicing</keyword>
<keyword id="KW-0106">Calcium</keyword>
<keyword id="KW-0446">Lipid-binding</keyword>
<keyword id="KW-0472">Membrane</keyword>
<keyword id="KW-0479">Metal-binding</keyword>
<keyword id="KW-0597">Phosphoprotein</keyword>
<keyword id="KW-1185">Reference proteome</keyword>
<name>PITM3_MOUSE</name>
<proteinExistence type="evidence at protein level"/>
<dbReference type="EMBL" id="AK147444">
    <property type="protein sequence ID" value="BAE27916.1"/>
    <property type="molecule type" value="mRNA"/>
</dbReference>
<dbReference type="EMBL" id="AK147630">
    <property type="protein sequence ID" value="BAE28035.1"/>
    <property type="molecule type" value="mRNA"/>
</dbReference>
<dbReference type="EMBL" id="BX119911">
    <property type="status" value="NOT_ANNOTATED_CDS"/>
    <property type="molecule type" value="Genomic_DNA"/>
</dbReference>
<dbReference type="CCDS" id="CCDS24978.1">
    <molecule id="Q3UHE1-1"/>
</dbReference>
<dbReference type="CCDS" id="CCDS36213.1">
    <molecule id="Q3UHE1-2"/>
</dbReference>
<dbReference type="RefSeq" id="NP_001020098.1">
    <molecule id="Q3UHE1-1"/>
    <property type="nucleotide sequence ID" value="NM_001024927.3"/>
</dbReference>
<dbReference type="RefSeq" id="NP_001075110.1">
    <molecule id="Q3UHE1-2"/>
    <property type="nucleotide sequence ID" value="NM_001081641.2"/>
</dbReference>
<dbReference type="BioGRID" id="236516">
    <property type="interactions" value="4"/>
</dbReference>
<dbReference type="FunCoup" id="Q3UHE1">
    <property type="interactions" value="73"/>
</dbReference>
<dbReference type="STRING" id="10090.ENSMUSP00000074737"/>
<dbReference type="GlyGen" id="Q3UHE1">
    <property type="glycosylation" value="2 sites, 2 N-linked glycans (2 sites)"/>
</dbReference>
<dbReference type="iPTMnet" id="Q3UHE1"/>
<dbReference type="PhosphoSitePlus" id="Q3UHE1"/>
<dbReference type="SwissPalm" id="Q3UHE1"/>
<dbReference type="PaxDb" id="10090-ENSMUSP00000074737"/>
<dbReference type="PeptideAtlas" id="Q3UHE1"/>
<dbReference type="ProteomicsDB" id="289580">
    <molecule id="Q3UHE1-1"/>
</dbReference>
<dbReference type="ProteomicsDB" id="289581">
    <molecule id="Q3UHE1-2"/>
</dbReference>
<dbReference type="Antibodypedia" id="23792">
    <property type="antibodies" value="114 antibodies from 26 providers"/>
</dbReference>
<dbReference type="Ensembl" id="ENSMUST00000075258.13">
    <molecule id="Q3UHE1-1"/>
    <property type="protein sequence ID" value="ENSMUSP00000074737.7"/>
    <property type="gene ID" value="ENSMUSG00000040543.17"/>
</dbReference>
<dbReference type="Ensembl" id="ENSMUST00000108508.3">
    <molecule id="Q3UHE1-2"/>
    <property type="protein sequence ID" value="ENSMUSP00000104148.3"/>
    <property type="gene ID" value="ENSMUSG00000040543.17"/>
</dbReference>
<dbReference type="GeneID" id="327958"/>
<dbReference type="KEGG" id="mmu:327958"/>
<dbReference type="UCSC" id="uc007jya.1">
    <molecule id="Q3UHE1-1"/>
    <property type="organism name" value="mouse"/>
</dbReference>
<dbReference type="UCSC" id="uc007jyb.1">
    <molecule id="Q3UHE1-2"/>
    <property type="organism name" value="mouse"/>
</dbReference>
<dbReference type="AGR" id="MGI:2685726"/>
<dbReference type="CTD" id="83394"/>
<dbReference type="MGI" id="MGI:2685726">
    <property type="gene designation" value="Pitpnm3"/>
</dbReference>
<dbReference type="VEuPathDB" id="HostDB:ENSMUSG00000040543"/>
<dbReference type="eggNOG" id="KOG3668">
    <property type="taxonomic scope" value="Eukaryota"/>
</dbReference>
<dbReference type="GeneTree" id="ENSGT00940000153849"/>
<dbReference type="HOGENOM" id="CLU_007179_1_0_1"/>
<dbReference type="InParanoid" id="Q3UHE1"/>
<dbReference type="OMA" id="PSIVWMR"/>
<dbReference type="OrthoDB" id="10053061at2759"/>
<dbReference type="PhylomeDB" id="Q3UHE1"/>
<dbReference type="TreeFam" id="TF312967"/>
<dbReference type="Reactome" id="R-MMU-1483226">
    <property type="pathway name" value="Synthesis of PI"/>
</dbReference>
<dbReference type="BioGRID-ORCS" id="327958">
    <property type="hits" value="10 hits in 81 CRISPR screens"/>
</dbReference>
<dbReference type="ChiTaRS" id="Pitpnm3">
    <property type="organism name" value="mouse"/>
</dbReference>
<dbReference type="PRO" id="PR:Q3UHE1"/>
<dbReference type="Proteomes" id="UP000000589">
    <property type="component" value="Chromosome 11"/>
</dbReference>
<dbReference type="RNAct" id="Q3UHE1">
    <property type="molecule type" value="protein"/>
</dbReference>
<dbReference type="Bgee" id="ENSMUSG00000040543">
    <property type="expression patterns" value="Expressed in retinal neural layer and 143 other cell types or tissues"/>
</dbReference>
<dbReference type="GO" id="GO:0044297">
    <property type="term" value="C:cell body"/>
    <property type="evidence" value="ECO:0007669"/>
    <property type="project" value="Ensembl"/>
</dbReference>
<dbReference type="GO" id="GO:0042995">
    <property type="term" value="C:cell projection"/>
    <property type="evidence" value="ECO:0007669"/>
    <property type="project" value="Ensembl"/>
</dbReference>
<dbReference type="GO" id="GO:0012505">
    <property type="term" value="C:endomembrane system"/>
    <property type="evidence" value="ECO:0007669"/>
    <property type="project" value="UniProtKB-SubCell"/>
</dbReference>
<dbReference type="GO" id="GO:0016020">
    <property type="term" value="C:membrane"/>
    <property type="evidence" value="ECO:0007669"/>
    <property type="project" value="UniProtKB-KW"/>
</dbReference>
<dbReference type="GO" id="GO:0005509">
    <property type="term" value="F:calcium ion binding"/>
    <property type="evidence" value="ECO:0007669"/>
    <property type="project" value="Ensembl"/>
</dbReference>
<dbReference type="GO" id="GO:0008289">
    <property type="term" value="F:lipid binding"/>
    <property type="evidence" value="ECO:0007669"/>
    <property type="project" value="UniProtKB-KW"/>
</dbReference>
<dbReference type="GO" id="GO:0005548">
    <property type="term" value="F:phospholipid transporter activity"/>
    <property type="evidence" value="ECO:0007669"/>
    <property type="project" value="InterPro"/>
</dbReference>
<dbReference type="GO" id="GO:0030971">
    <property type="term" value="F:receptor tyrosine kinase binding"/>
    <property type="evidence" value="ECO:0007669"/>
    <property type="project" value="Ensembl"/>
</dbReference>
<dbReference type="FunFam" id="3.40.50.1000:FF:000085">
    <property type="entry name" value="Membrane-associated phosphatidylinositol transfer protein 3"/>
    <property type="match status" value="1"/>
</dbReference>
<dbReference type="Gene3D" id="3.40.50.1000">
    <property type="entry name" value="HAD superfamily/HAD-like"/>
    <property type="match status" value="1"/>
</dbReference>
<dbReference type="InterPro" id="IPR004177">
    <property type="entry name" value="DDHD_dom"/>
</dbReference>
<dbReference type="InterPro" id="IPR036412">
    <property type="entry name" value="HAD-like_sf"/>
</dbReference>
<dbReference type="InterPro" id="IPR023214">
    <property type="entry name" value="HAD_sf"/>
</dbReference>
<dbReference type="InterPro" id="IPR031315">
    <property type="entry name" value="LNS2/PITP"/>
</dbReference>
<dbReference type="InterPro" id="IPR001666">
    <property type="entry name" value="PI_transfer"/>
</dbReference>
<dbReference type="PANTHER" id="PTHR10658">
    <property type="entry name" value="PHOSPHATIDYLINOSITOL TRANSFER PROTEIN"/>
    <property type="match status" value="1"/>
</dbReference>
<dbReference type="PANTHER" id="PTHR10658:SF27">
    <property type="entry name" value="PHOSPHATIDYLINOSITOL TRANSFER PROTEIN BETA ISOFORM"/>
    <property type="match status" value="1"/>
</dbReference>
<dbReference type="Pfam" id="PF02862">
    <property type="entry name" value="DDHD"/>
    <property type="match status" value="2"/>
</dbReference>
<dbReference type="Pfam" id="PF24694">
    <property type="entry name" value="LNS2_PITM1-3"/>
    <property type="match status" value="1"/>
</dbReference>
<dbReference type="Pfam" id="PF24695">
    <property type="entry name" value="PITM1-3"/>
    <property type="match status" value="1"/>
</dbReference>
<dbReference type="SMART" id="SM01127">
    <property type="entry name" value="DDHD"/>
    <property type="match status" value="1"/>
</dbReference>
<dbReference type="SMART" id="SM00775">
    <property type="entry name" value="LNS2"/>
    <property type="match status" value="1"/>
</dbReference>
<dbReference type="SUPFAM" id="SSF56784">
    <property type="entry name" value="HAD-like"/>
    <property type="match status" value="1"/>
</dbReference>
<dbReference type="PROSITE" id="PS51043">
    <property type="entry name" value="DDHD"/>
    <property type="match status" value="1"/>
</dbReference>
<evidence type="ECO:0000250" key="1"/>
<evidence type="ECO:0000250" key="2">
    <source>
        <dbReference type="UniProtKB" id="Q9BZ71"/>
    </source>
</evidence>
<evidence type="ECO:0000255" key="3">
    <source>
        <dbReference type="PROSITE-ProRule" id="PRU00378"/>
    </source>
</evidence>
<evidence type="ECO:0000256" key="4">
    <source>
        <dbReference type="SAM" id="MobiDB-lite"/>
    </source>
</evidence>
<evidence type="ECO:0000303" key="5">
    <source>
    </source>
</evidence>
<evidence type="ECO:0000305" key="6"/>
<evidence type="ECO:0007744" key="7">
    <source>
    </source>
</evidence>
<sequence length="974" mass="106462">MAKAGSAGGPSPGGGAPWHLRNVLSDSVESSDDEFFDAREEVAEGKNAILIGMSQWSSNDLVEQIETIGKLDERQGDGATACTSSILQEKQRELYRVSLRRQRFPAQGSIEIHEDGEEGCSQRSCKTHVLLLVLHGGNVLDTGSGDPSCKAADIHTFSSVLEKVMRAHFPAALGHILIKFVPCPAICSEAFSLVSNLNPYSHDEGCLGTSQDHVPLAALPLLAISSPQYQDAVATVIERANHIYGEFLKSSDGIGFNGQVCLIGDCVGGLLAFDAICYSAGPSGDSPGSSSRKGSISSTQDTPVVVEEDCSLASSKRLSKSNVDVSSGVEDEDPKRPLPRKQSDSSTYDCEAITQHHAFLSSIHSSVLKDEAEAPAAGTPQLSEVSLGRFDFDVSDFFLFGSPLGLVLAMRRTVLPGIDGFQMRPACSQVYSFFHCADPSASRLEPLLEPKFHLVPPVSVPRYQRFPLGDGQSLLLADALHTHSPLFLEGSSRGSPPLLDAPASPPQAPRFQRTERRLSKGSSHSDSSESSDSLAPMGASRITAKWWGTKRIDYALYCPDVLTAFPTVALPHLFHASYWESTDVVAFILRQVMRYESASVKESTGLDPTALSPANPREKWLRKRTQVKLRNVTANHRANDVIAAEDGPQVLVGRFMYGPLDMVALTGEKVDILVMTEPSSGRWVHLDTEITNNSGRITYNVPRPRRLGVGVYPVKMVVRGDQTCAMSYLTVLPRGMECVVFSIDGSFAASVSIMGSDPKVRPGAVDVVRHWQDLGYMILYITGRPDMQKQRVVSWLSQHNFPQGMIFFSDGLVHDPLRQKAIFLRNLMQECFIKITAAYGSTKDISVYSVLGLPASQIFIVGRSTKKYQTQCQFLSEGYAAHLAALEASHRSRPKKNNSRMILRKGSFGLHAQPEFLRKRNHLRRTMSVQQPDPPAANPKPERAQSQPESDKDHERPLPALSWARGPPKFESVP</sequence>
<protein>
    <recommendedName>
        <fullName>Membrane-associated phosphatidylinositol transfer protein 3</fullName>
    </recommendedName>
    <alternativeName>
        <fullName>Phosphatidylinositol transfer protein, membrane-associated 3</fullName>
        <shortName>PITPnm 3</shortName>
    </alternativeName>
    <alternativeName>
        <fullName>Pyk2 N-terminal domain-interacting receptor 1</fullName>
        <shortName>NIR-1</shortName>
    </alternativeName>
</protein>
<gene>
    <name type="primary">Pitpnm3</name>
    <name type="synonym">Nir1</name>
</gene>